<organism>
    <name type="scientific">Acidithiobacillus ferrooxidans (strain ATCC 53993 / BNL-5-31)</name>
    <name type="common">Leptospirillum ferrooxidans (ATCC 53993)</name>
    <dbReference type="NCBI Taxonomy" id="380394"/>
    <lineage>
        <taxon>Bacteria</taxon>
        <taxon>Pseudomonadati</taxon>
        <taxon>Pseudomonadota</taxon>
        <taxon>Acidithiobacillia</taxon>
        <taxon>Acidithiobacillales</taxon>
        <taxon>Acidithiobacillaceae</taxon>
        <taxon>Acidithiobacillus</taxon>
    </lineage>
</organism>
<protein>
    <recommendedName>
        <fullName evidence="1">Serine--tRNA ligase</fullName>
        <ecNumber evidence="1">6.1.1.11</ecNumber>
    </recommendedName>
    <alternativeName>
        <fullName evidence="1">Seryl-tRNA synthetase</fullName>
        <shortName evidence="1">SerRS</shortName>
    </alternativeName>
    <alternativeName>
        <fullName evidence="1">Seryl-tRNA(Ser/Sec) synthetase</fullName>
    </alternativeName>
</protein>
<dbReference type="EC" id="6.1.1.11" evidence="1"/>
<dbReference type="EMBL" id="CP001132">
    <property type="protein sequence ID" value="ACH82804.1"/>
    <property type="molecule type" value="Genomic_DNA"/>
</dbReference>
<dbReference type="RefSeq" id="WP_009566960.1">
    <property type="nucleotide sequence ID" value="NC_011206.1"/>
</dbReference>
<dbReference type="SMR" id="B5EMC5"/>
<dbReference type="GeneID" id="65279756"/>
<dbReference type="KEGG" id="afe:Lferr_0550"/>
<dbReference type="eggNOG" id="COG0172">
    <property type="taxonomic scope" value="Bacteria"/>
</dbReference>
<dbReference type="HOGENOM" id="CLU_023797_1_1_6"/>
<dbReference type="UniPathway" id="UPA00906">
    <property type="reaction ID" value="UER00895"/>
</dbReference>
<dbReference type="GO" id="GO:0005737">
    <property type="term" value="C:cytoplasm"/>
    <property type="evidence" value="ECO:0007669"/>
    <property type="project" value="UniProtKB-SubCell"/>
</dbReference>
<dbReference type="GO" id="GO:0005524">
    <property type="term" value="F:ATP binding"/>
    <property type="evidence" value="ECO:0007669"/>
    <property type="project" value="UniProtKB-UniRule"/>
</dbReference>
<dbReference type="GO" id="GO:0004828">
    <property type="term" value="F:serine-tRNA ligase activity"/>
    <property type="evidence" value="ECO:0007669"/>
    <property type="project" value="UniProtKB-UniRule"/>
</dbReference>
<dbReference type="GO" id="GO:0016260">
    <property type="term" value="P:selenocysteine biosynthetic process"/>
    <property type="evidence" value="ECO:0007669"/>
    <property type="project" value="UniProtKB-UniRule"/>
</dbReference>
<dbReference type="GO" id="GO:0006434">
    <property type="term" value="P:seryl-tRNA aminoacylation"/>
    <property type="evidence" value="ECO:0007669"/>
    <property type="project" value="UniProtKB-UniRule"/>
</dbReference>
<dbReference type="CDD" id="cd00770">
    <property type="entry name" value="SerRS_core"/>
    <property type="match status" value="1"/>
</dbReference>
<dbReference type="Gene3D" id="3.30.930.10">
    <property type="entry name" value="Bira Bifunctional Protein, Domain 2"/>
    <property type="match status" value="1"/>
</dbReference>
<dbReference type="Gene3D" id="1.10.287.40">
    <property type="entry name" value="Serine-tRNA synthetase, tRNA binding domain"/>
    <property type="match status" value="1"/>
</dbReference>
<dbReference type="HAMAP" id="MF_00176">
    <property type="entry name" value="Ser_tRNA_synth_type1"/>
    <property type="match status" value="1"/>
</dbReference>
<dbReference type="InterPro" id="IPR002314">
    <property type="entry name" value="aa-tRNA-synt_IIb"/>
</dbReference>
<dbReference type="InterPro" id="IPR006195">
    <property type="entry name" value="aa-tRNA-synth_II"/>
</dbReference>
<dbReference type="InterPro" id="IPR045864">
    <property type="entry name" value="aa-tRNA-synth_II/BPL/LPL"/>
</dbReference>
<dbReference type="InterPro" id="IPR002317">
    <property type="entry name" value="Ser-tRNA-ligase_type_1"/>
</dbReference>
<dbReference type="InterPro" id="IPR015866">
    <property type="entry name" value="Ser-tRNA-synth_1_N"/>
</dbReference>
<dbReference type="InterPro" id="IPR042103">
    <property type="entry name" value="SerRS_1_N_sf"/>
</dbReference>
<dbReference type="InterPro" id="IPR033729">
    <property type="entry name" value="SerRS_core"/>
</dbReference>
<dbReference type="InterPro" id="IPR010978">
    <property type="entry name" value="tRNA-bd_arm"/>
</dbReference>
<dbReference type="NCBIfam" id="TIGR00414">
    <property type="entry name" value="serS"/>
    <property type="match status" value="1"/>
</dbReference>
<dbReference type="PANTHER" id="PTHR43697:SF1">
    <property type="entry name" value="SERINE--TRNA LIGASE"/>
    <property type="match status" value="1"/>
</dbReference>
<dbReference type="PANTHER" id="PTHR43697">
    <property type="entry name" value="SERYL-TRNA SYNTHETASE"/>
    <property type="match status" value="1"/>
</dbReference>
<dbReference type="Pfam" id="PF02403">
    <property type="entry name" value="Seryl_tRNA_N"/>
    <property type="match status" value="1"/>
</dbReference>
<dbReference type="Pfam" id="PF00587">
    <property type="entry name" value="tRNA-synt_2b"/>
    <property type="match status" value="1"/>
</dbReference>
<dbReference type="PIRSF" id="PIRSF001529">
    <property type="entry name" value="Ser-tRNA-synth_IIa"/>
    <property type="match status" value="1"/>
</dbReference>
<dbReference type="PRINTS" id="PR00981">
    <property type="entry name" value="TRNASYNTHSER"/>
</dbReference>
<dbReference type="SUPFAM" id="SSF55681">
    <property type="entry name" value="Class II aaRS and biotin synthetases"/>
    <property type="match status" value="1"/>
</dbReference>
<dbReference type="SUPFAM" id="SSF46589">
    <property type="entry name" value="tRNA-binding arm"/>
    <property type="match status" value="1"/>
</dbReference>
<dbReference type="PROSITE" id="PS50862">
    <property type="entry name" value="AA_TRNA_LIGASE_II"/>
    <property type="match status" value="1"/>
</dbReference>
<comment type="function">
    <text evidence="1">Catalyzes the attachment of serine to tRNA(Ser). Is also able to aminoacylate tRNA(Sec) with serine, to form the misacylated tRNA L-seryl-tRNA(Sec), which will be further converted into selenocysteinyl-tRNA(Sec).</text>
</comment>
<comment type="catalytic activity">
    <reaction evidence="1">
        <text>tRNA(Ser) + L-serine + ATP = L-seryl-tRNA(Ser) + AMP + diphosphate + H(+)</text>
        <dbReference type="Rhea" id="RHEA:12292"/>
        <dbReference type="Rhea" id="RHEA-COMP:9669"/>
        <dbReference type="Rhea" id="RHEA-COMP:9703"/>
        <dbReference type="ChEBI" id="CHEBI:15378"/>
        <dbReference type="ChEBI" id="CHEBI:30616"/>
        <dbReference type="ChEBI" id="CHEBI:33019"/>
        <dbReference type="ChEBI" id="CHEBI:33384"/>
        <dbReference type="ChEBI" id="CHEBI:78442"/>
        <dbReference type="ChEBI" id="CHEBI:78533"/>
        <dbReference type="ChEBI" id="CHEBI:456215"/>
        <dbReference type="EC" id="6.1.1.11"/>
    </reaction>
</comment>
<comment type="catalytic activity">
    <reaction evidence="1">
        <text>tRNA(Sec) + L-serine + ATP = L-seryl-tRNA(Sec) + AMP + diphosphate + H(+)</text>
        <dbReference type="Rhea" id="RHEA:42580"/>
        <dbReference type="Rhea" id="RHEA-COMP:9742"/>
        <dbReference type="Rhea" id="RHEA-COMP:10128"/>
        <dbReference type="ChEBI" id="CHEBI:15378"/>
        <dbReference type="ChEBI" id="CHEBI:30616"/>
        <dbReference type="ChEBI" id="CHEBI:33019"/>
        <dbReference type="ChEBI" id="CHEBI:33384"/>
        <dbReference type="ChEBI" id="CHEBI:78442"/>
        <dbReference type="ChEBI" id="CHEBI:78533"/>
        <dbReference type="ChEBI" id="CHEBI:456215"/>
        <dbReference type="EC" id="6.1.1.11"/>
    </reaction>
</comment>
<comment type="pathway">
    <text evidence="1">Aminoacyl-tRNA biosynthesis; selenocysteinyl-tRNA(Sec) biosynthesis; L-seryl-tRNA(Sec) from L-serine and tRNA(Sec): step 1/1.</text>
</comment>
<comment type="subunit">
    <text evidence="1">Homodimer. The tRNA molecule binds across the dimer.</text>
</comment>
<comment type="subcellular location">
    <subcellularLocation>
        <location evidence="1">Cytoplasm</location>
    </subcellularLocation>
</comment>
<comment type="domain">
    <text evidence="1">Consists of two distinct domains, a catalytic core and a N-terminal extension that is involved in tRNA binding.</text>
</comment>
<comment type="similarity">
    <text evidence="1">Belongs to the class-II aminoacyl-tRNA synthetase family. Type-1 seryl-tRNA synthetase subfamily.</text>
</comment>
<evidence type="ECO:0000255" key="1">
    <source>
        <dbReference type="HAMAP-Rule" id="MF_00176"/>
    </source>
</evidence>
<proteinExistence type="inferred from homology"/>
<name>SYS_ACIF5</name>
<keyword id="KW-0030">Aminoacyl-tRNA synthetase</keyword>
<keyword id="KW-0067">ATP-binding</keyword>
<keyword id="KW-0963">Cytoplasm</keyword>
<keyword id="KW-0436">Ligase</keyword>
<keyword id="KW-0547">Nucleotide-binding</keyword>
<keyword id="KW-0648">Protein biosynthesis</keyword>
<sequence length="421" mass="46558">MLDPSLLRSSPETVAAGLARRHFTLDVAALNALDQQRKALQIQLEQLRNARNEASRQIGQARRQGLDTGAMQAAAASNGEEIKTLEQSLERTLAEWDTLTIGLPNIPQDSVPDGRDEADNVVLRHWGSPSTFAFPPRDHVELGEALGIIDFAAGARLAGTRFVVLRGAGARLERALTQFMLDLHTTEHGYTEIAPPFLANADSLYGTGQLPKFEEDLFALRDDPYYLIPTAEVPLTNLLRGEIVASLPQRFCAYTPCFRREAGAYGRDTRGMIRQHQFDKVELVQIVRPEDSAQAHETLTAHAEKVLQLLELPYRVTALCAGDLGFSAAKTYDLEVWLPGQNQYREISSCSNFESFQARRLQLRYRAEDGKPQLVHTLNGSGLAVGRTLVALLENHQQADGRIRIPAALRPYLGGMTVIQA</sequence>
<gene>
    <name evidence="1" type="primary">serS</name>
    <name type="ordered locus">Lferr_0550</name>
</gene>
<feature type="chain" id="PRO_1000098025" description="Serine--tRNA ligase">
    <location>
        <begin position="1"/>
        <end position="421"/>
    </location>
</feature>
<feature type="binding site" evidence="1">
    <location>
        <begin position="230"/>
        <end position="232"/>
    </location>
    <ligand>
        <name>L-serine</name>
        <dbReference type="ChEBI" id="CHEBI:33384"/>
    </ligand>
</feature>
<feature type="binding site" evidence="1">
    <location>
        <begin position="259"/>
        <end position="261"/>
    </location>
    <ligand>
        <name>ATP</name>
        <dbReference type="ChEBI" id="CHEBI:30616"/>
    </ligand>
</feature>
<feature type="binding site" evidence="1">
    <location>
        <position position="282"/>
    </location>
    <ligand>
        <name>L-serine</name>
        <dbReference type="ChEBI" id="CHEBI:33384"/>
    </ligand>
</feature>
<feature type="binding site" evidence="1">
    <location>
        <begin position="346"/>
        <end position="349"/>
    </location>
    <ligand>
        <name>ATP</name>
        <dbReference type="ChEBI" id="CHEBI:30616"/>
    </ligand>
</feature>
<feature type="binding site" evidence="1">
    <location>
        <position position="381"/>
    </location>
    <ligand>
        <name>L-serine</name>
        <dbReference type="ChEBI" id="CHEBI:33384"/>
    </ligand>
</feature>
<accession>B5EMC5</accession>
<reference key="1">
    <citation type="submission" date="2008-08" db="EMBL/GenBank/DDBJ databases">
        <title>Complete sequence of Acidithiobacillus ferrooxidans ATCC 53993.</title>
        <authorList>
            <person name="Lucas S."/>
            <person name="Copeland A."/>
            <person name="Lapidus A."/>
            <person name="Glavina del Rio T."/>
            <person name="Dalin E."/>
            <person name="Tice H."/>
            <person name="Bruce D."/>
            <person name="Goodwin L."/>
            <person name="Pitluck S."/>
            <person name="Sims D."/>
            <person name="Brettin T."/>
            <person name="Detter J.C."/>
            <person name="Han C."/>
            <person name="Kuske C.R."/>
            <person name="Larimer F."/>
            <person name="Land M."/>
            <person name="Hauser L."/>
            <person name="Kyrpides N."/>
            <person name="Lykidis A."/>
            <person name="Borole A.P."/>
        </authorList>
    </citation>
    <scope>NUCLEOTIDE SEQUENCE [LARGE SCALE GENOMIC DNA]</scope>
    <source>
        <strain>ATCC 53993 / BNL-5-31</strain>
    </source>
</reference>